<gene>
    <name type="ordered locus">PSPTO_5379</name>
</gene>
<sequence length="268" mass="28927">MNAFDRARQSAIAAAREARGTYRNGLVTPTAGVAPGMTQANLIALPRDWAYDFLLYAQRNPKACPILDVSDAGSPTTLLAEGSDLRTDIPMYRIWRDGKLAEEVSDATQAWAEHDDMVAFLIGCSFTFETPLQEAGIEVRHITDGCNVPMYRTNRACRPAGRLHGEMVVSMRPIPADRVAEASAISGRYPSVHGAPVHIGEPGRLGINDLSRPDFGDAVSIKPGEVPVFWACGVTPQAAVMASGVPFAITHSPGYMFITDVPDSTYHV</sequence>
<name>Y5379_PSESM</name>
<accession>Q87UC6</accession>
<dbReference type="EC" id="4.2.1.-" evidence="1"/>
<dbReference type="EMBL" id="AE016853">
    <property type="protein sequence ID" value="AAO58801.1"/>
    <property type="molecule type" value="Genomic_DNA"/>
</dbReference>
<dbReference type="RefSeq" id="NP_795106.1">
    <property type="nucleotide sequence ID" value="NC_004578.1"/>
</dbReference>
<dbReference type="RefSeq" id="WP_011105455.1">
    <property type="nucleotide sequence ID" value="NC_004578.1"/>
</dbReference>
<dbReference type="PDB" id="2PIF">
    <property type="method" value="X-ray"/>
    <property type="resolution" value="2.30 A"/>
    <property type="chains" value="A/B=1-268"/>
</dbReference>
<dbReference type="PDBsum" id="2PIF"/>
<dbReference type="SMR" id="Q87UC6"/>
<dbReference type="STRING" id="223283.PSPTO_5379"/>
<dbReference type="GeneID" id="1187066"/>
<dbReference type="KEGG" id="pst:PSPTO_5379"/>
<dbReference type="PATRIC" id="fig|223283.9.peg.5505"/>
<dbReference type="eggNOG" id="COG4336">
    <property type="taxonomic scope" value="Bacteria"/>
</dbReference>
<dbReference type="HOGENOM" id="CLU_059759_0_0_6"/>
<dbReference type="OrthoDB" id="149585at2"/>
<dbReference type="PhylomeDB" id="Q87UC6"/>
<dbReference type="EvolutionaryTrace" id="Q87UC6"/>
<dbReference type="Proteomes" id="UP000002515">
    <property type="component" value="Chromosome"/>
</dbReference>
<dbReference type="GO" id="GO:0016829">
    <property type="term" value="F:lyase activity"/>
    <property type="evidence" value="ECO:0007669"/>
    <property type="project" value="UniProtKB-KW"/>
</dbReference>
<dbReference type="FunFam" id="3.30.2040.10:FF:000001">
    <property type="entry name" value="D-glutamate cyclase, mitochondrial"/>
    <property type="match status" value="1"/>
</dbReference>
<dbReference type="Gene3D" id="3.40.1640.10">
    <property type="entry name" value="PSTPO5379-like"/>
    <property type="match status" value="1"/>
</dbReference>
<dbReference type="Gene3D" id="3.30.2040.10">
    <property type="entry name" value="PSTPO5379-like domain"/>
    <property type="match status" value="1"/>
</dbReference>
<dbReference type="HAMAP" id="MF_01830">
    <property type="entry name" value="Hydro_lyase"/>
    <property type="match status" value="1"/>
</dbReference>
<dbReference type="InterPro" id="IPR009906">
    <property type="entry name" value="D-Glu_cyclase"/>
</dbReference>
<dbReference type="InterPro" id="IPR038021">
    <property type="entry name" value="Putative_hydro-lyase"/>
</dbReference>
<dbReference type="InterPro" id="IPR016938">
    <property type="entry name" value="UPF0317"/>
</dbReference>
<dbReference type="NCBIfam" id="NF003969">
    <property type="entry name" value="PRK05463.1"/>
    <property type="match status" value="1"/>
</dbReference>
<dbReference type="PANTHER" id="PTHR32022">
    <property type="entry name" value="D-GLUTAMATE CYCLASE, MITOCHONDRIAL"/>
    <property type="match status" value="1"/>
</dbReference>
<dbReference type="PANTHER" id="PTHR32022:SF10">
    <property type="entry name" value="D-GLUTAMATE CYCLASE, MITOCHONDRIAL"/>
    <property type="match status" value="1"/>
</dbReference>
<dbReference type="Pfam" id="PF07286">
    <property type="entry name" value="D-Glu_cyclase"/>
    <property type="match status" value="1"/>
</dbReference>
<dbReference type="PIRSF" id="PIRSF029755">
    <property type="entry name" value="UCP029755"/>
    <property type="match status" value="1"/>
</dbReference>
<dbReference type="SUPFAM" id="SSF160920">
    <property type="entry name" value="PSTPO5379-like"/>
    <property type="match status" value="1"/>
</dbReference>
<reference key="1">
    <citation type="journal article" date="2003" name="Proc. Natl. Acad. Sci. U.S.A.">
        <title>The complete genome sequence of the Arabidopsis and tomato pathogen Pseudomonas syringae pv. tomato DC3000.</title>
        <authorList>
            <person name="Buell C.R."/>
            <person name="Joardar V."/>
            <person name="Lindeberg M."/>
            <person name="Selengut J."/>
            <person name="Paulsen I.T."/>
            <person name="Gwinn M.L."/>
            <person name="Dodson R.J."/>
            <person name="DeBoy R.T."/>
            <person name="Durkin A.S."/>
            <person name="Kolonay J.F."/>
            <person name="Madupu R."/>
            <person name="Daugherty S.C."/>
            <person name="Brinkac L.M."/>
            <person name="Beanan M.J."/>
            <person name="Haft D.H."/>
            <person name="Nelson W.C."/>
            <person name="Davidsen T.M."/>
            <person name="Zafar N."/>
            <person name="Zhou L."/>
            <person name="Liu J."/>
            <person name="Yuan Q."/>
            <person name="Khouri H.M."/>
            <person name="Fedorova N.B."/>
            <person name="Tran B."/>
            <person name="Russell D."/>
            <person name="Berry K.J."/>
            <person name="Utterback T.R."/>
            <person name="Van Aken S.E."/>
            <person name="Feldblyum T.V."/>
            <person name="D'Ascenzo M."/>
            <person name="Deng W.-L."/>
            <person name="Ramos A.R."/>
            <person name="Alfano J.R."/>
            <person name="Cartinhour S."/>
            <person name="Chatterjee A.K."/>
            <person name="Delaney T.P."/>
            <person name="Lazarowitz S.G."/>
            <person name="Martin G.B."/>
            <person name="Schneider D.J."/>
            <person name="Tang X."/>
            <person name="Bender C.L."/>
            <person name="White O."/>
            <person name="Fraser C.M."/>
            <person name="Collmer A."/>
        </authorList>
    </citation>
    <scope>NUCLEOTIDE SEQUENCE [LARGE SCALE GENOMIC DNA]</scope>
    <source>
        <strain>ATCC BAA-871 / DC3000</strain>
    </source>
</reference>
<reference key="2">
    <citation type="submission" date="2009-02" db="PDB data bank">
        <title>Crystal structure of UPF0317 protein PSPTO_5379 from Pseudomonas syringae pv. tomato.</title>
        <authorList>
            <consortium name="Northeast structural genomics consortium (NESG)"/>
        </authorList>
    </citation>
    <scope>X-RAY CRYSTALLOGRAPHY (2.3 ANGSTROMS)</scope>
</reference>
<protein>
    <recommendedName>
        <fullName evidence="1">Putative hydro-lyase PSPTO_5379</fullName>
        <ecNumber evidence="1">4.2.1.-</ecNumber>
    </recommendedName>
</protein>
<feature type="chain" id="PRO_0000217170" description="Putative hydro-lyase PSPTO_5379">
    <location>
        <begin position="1"/>
        <end position="268"/>
    </location>
</feature>
<feature type="helix" evidence="2">
    <location>
        <begin position="8"/>
        <end position="23"/>
    </location>
</feature>
<feature type="strand" evidence="2">
    <location>
        <begin position="39"/>
        <end position="46"/>
    </location>
</feature>
<feature type="helix" evidence="2">
    <location>
        <begin position="47"/>
        <end position="59"/>
    </location>
</feature>
<feature type="turn" evidence="2">
    <location>
        <begin position="61"/>
        <end position="63"/>
    </location>
</feature>
<feature type="strand" evidence="2">
    <location>
        <begin position="66"/>
        <end position="69"/>
    </location>
</feature>
<feature type="turn" evidence="2">
    <location>
        <begin position="85"/>
        <end position="87"/>
    </location>
</feature>
<feature type="strand" evidence="2">
    <location>
        <begin position="88"/>
        <end position="90"/>
    </location>
</feature>
<feature type="strand" evidence="2">
    <location>
        <begin position="92"/>
        <end position="96"/>
    </location>
</feature>
<feature type="strand" evidence="2">
    <location>
        <begin position="99"/>
        <end position="105"/>
    </location>
</feature>
<feature type="helix" evidence="2">
    <location>
        <begin position="110"/>
        <end position="113"/>
    </location>
</feature>
<feature type="strand" evidence="2">
    <location>
        <begin position="115"/>
        <end position="122"/>
    </location>
</feature>
<feature type="helix" evidence="2">
    <location>
        <begin position="129"/>
        <end position="135"/>
    </location>
</feature>
<feature type="helix" evidence="2">
    <location>
        <begin position="140"/>
        <end position="143"/>
    </location>
</feature>
<feature type="strand" evidence="2">
    <location>
        <begin position="150"/>
        <end position="156"/>
    </location>
</feature>
<feature type="strand" evidence="2">
    <location>
        <begin position="166"/>
        <end position="175"/>
    </location>
</feature>
<feature type="helix" evidence="2">
    <location>
        <begin position="176"/>
        <end position="178"/>
    </location>
</feature>
<feature type="helix" evidence="2">
    <location>
        <begin position="179"/>
        <end position="187"/>
    </location>
</feature>
<feature type="strand" evidence="2">
    <location>
        <begin position="197"/>
        <end position="200"/>
    </location>
</feature>
<feature type="helix" evidence="2">
    <location>
        <begin position="202"/>
        <end position="205"/>
    </location>
</feature>
<feature type="strand" evidence="2">
    <location>
        <begin position="214"/>
        <end position="216"/>
    </location>
</feature>
<feature type="strand" evidence="2">
    <location>
        <begin position="225"/>
        <end position="231"/>
    </location>
</feature>
<feature type="helix" evidence="2">
    <location>
        <begin position="235"/>
        <end position="243"/>
    </location>
</feature>
<feature type="strand" evidence="2">
    <location>
        <begin position="246"/>
        <end position="252"/>
    </location>
</feature>
<organism>
    <name type="scientific">Pseudomonas syringae pv. tomato (strain ATCC BAA-871 / DC3000)</name>
    <dbReference type="NCBI Taxonomy" id="223283"/>
    <lineage>
        <taxon>Bacteria</taxon>
        <taxon>Pseudomonadati</taxon>
        <taxon>Pseudomonadota</taxon>
        <taxon>Gammaproteobacteria</taxon>
        <taxon>Pseudomonadales</taxon>
        <taxon>Pseudomonadaceae</taxon>
        <taxon>Pseudomonas</taxon>
    </lineage>
</organism>
<comment type="similarity">
    <text evidence="1">Belongs to the D-glutamate cyclase family.</text>
</comment>
<proteinExistence type="evidence at protein level"/>
<keyword id="KW-0002">3D-structure</keyword>
<keyword id="KW-0456">Lyase</keyword>
<keyword id="KW-1185">Reference proteome</keyword>
<evidence type="ECO:0000255" key="1">
    <source>
        <dbReference type="HAMAP-Rule" id="MF_01830"/>
    </source>
</evidence>
<evidence type="ECO:0007829" key="2">
    <source>
        <dbReference type="PDB" id="2PIF"/>
    </source>
</evidence>